<feature type="chain" id="PRO_0000241607" description="Large ribosomal subunit protein uL24">
    <location>
        <begin position="1"/>
        <end position="105"/>
    </location>
</feature>
<gene>
    <name evidence="1" type="primary">rplX</name>
    <name type="ordered locus">HCH_06206</name>
</gene>
<dbReference type="EMBL" id="CP000155">
    <property type="protein sequence ID" value="ABC32851.1"/>
    <property type="molecule type" value="Genomic_DNA"/>
</dbReference>
<dbReference type="RefSeq" id="WP_011399909.1">
    <property type="nucleotide sequence ID" value="NC_007645.1"/>
</dbReference>
<dbReference type="SMR" id="Q2S923"/>
<dbReference type="STRING" id="349521.HCH_06206"/>
<dbReference type="KEGG" id="hch:HCH_06206"/>
<dbReference type="eggNOG" id="COG0198">
    <property type="taxonomic scope" value="Bacteria"/>
</dbReference>
<dbReference type="HOGENOM" id="CLU_093315_2_2_6"/>
<dbReference type="OrthoDB" id="9807419at2"/>
<dbReference type="Proteomes" id="UP000000238">
    <property type="component" value="Chromosome"/>
</dbReference>
<dbReference type="GO" id="GO:1990904">
    <property type="term" value="C:ribonucleoprotein complex"/>
    <property type="evidence" value="ECO:0007669"/>
    <property type="project" value="UniProtKB-KW"/>
</dbReference>
<dbReference type="GO" id="GO:0005840">
    <property type="term" value="C:ribosome"/>
    <property type="evidence" value="ECO:0007669"/>
    <property type="project" value="UniProtKB-KW"/>
</dbReference>
<dbReference type="GO" id="GO:0019843">
    <property type="term" value="F:rRNA binding"/>
    <property type="evidence" value="ECO:0007669"/>
    <property type="project" value="UniProtKB-UniRule"/>
</dbReference>
<dbReference type="GO" id="GO:0003735">
    <property type="term" value="F:structural constituent of ribosome"/>
    <property type="evidence" value="ECO:0007669"/>
    <property type="project" value="InterPro"/>
</dbReference>
<dbReference type="GO" id="GO:0006412">
    <property type="term" value="P:translation"/>
    <property type="evidence" value="ECO:0007669"/>
    <property type="project" value="UniProtKB-UniRule"/>
</dbReference>
<dbReference type="CDD" id="cd06089">
    <property type="entry name" value="KOW_RPL26"/>
    <property type="match status" value="1"/>
</dbReference>
<dbReference type="FunFam" id="2.30.30.30:FF:000004">
    <property type="entry name" value="50S ribosomal protein L24"/>
    <property type="match status" value="1"/>
</dbReference>
<dbReference type="Gene3D" id="2.30.30.30">
    <property type="match status" value="1"/>
</dbReference>
<dbReference type="HAMAP" id="MF_01326_B">
    <property type="entry name" value="Ribosomal_uL24_B"/>
    <property type="match status" value="1"/>
</dbReference>
<dbReference type="InterPro" id="IPR005824">
    <property type="entry name" value="KOW"/>
</dbReference>
<dbReference type="InterPro" id="IPR014722">
    <property type="entry name" value="Rib_uL2_dom2"/>
</dbReference>
<dbReference type="InterPro" id="IPR003256">
    <property type="entry name" value="Ribosomal_uL24"/>
</dbReference>
<dbReference type="InterPro" id="IPR005825">
    <property type="entry name" value="Ribosomal_uL24_CS"/>
</dbReference>
<dbReference type="InterPro" id="IPR041988">
    <property type="entry name" value="Ribosomal_uL24_KOW"/>
</dbReference>
<dbReference type="InterPro" id="IPR008991">
    <property type="entry name" value="Translation_prot_SH3-like_sf"/>
</dbReference>
<dbReference type="NCBIfam" id="TIGR01079">
    <property type="entry name" value="rplX_bact"/>
    <property type="match status" value="1"/>
</dbReference>
<dbReference type="PANTHER" id="PTHR12903">
    <property type="entry name" value="MITOCHONDRIAL RIBOSOMAL PROTEIN L24"/>
    <property type="match status" value="1"/>
</dbReference>
<dbReference type="Pfam" id="PF00467">
    <property type="entry name" value="KOW"/>
    <property type="match status" value="1"/>
</dbReference>
<dbReference type="Pfam" id="PF17136">
    <property type="entry name" value="ribosomal_L24"/>
    <property type="match status" value="1"/>
</dbReference>
<dbReference type="SMART" id="SM00739">
    <property type="entry name" value="KOW"/>
    <property type="match status" value="1"/>
</dbReference>
<dbReference type="SUPFAM" id="SSF50104">
    <property type="entry name" value="Translation proteins SH3-like domain"/>
    <property type="match status" value="1"/>
</dbReference>
<dbReference type="PROSITE" id="PS01108">
    <property type="entry name" value="RIBOSOMAL_L24"/>
    <property type="match status" value="1"/>
</dbReference>
<comment type="function">
    <text evidence="1">One of two assembly initiator proteins, it binds directly to the 5'-end of the 23S rRNA, where it nucleates assembly of the 50S subunit.</text>
</comment>
<comment type="function">
    <text evidence="1">One of the proteins that surrounds the polypeptide exit tunnel on the outside of the subunit.</text>
</comment>
<comment type="subunit">
    <text evidence="1">Part of the 50S ribosomal subunit.</text>
</comment>
<comment type="similarity">
    <text evidence="1">Belongs to the universal ribosomal protein uL24 family.</text>
</comment>
<organism>
    <name type="scientific">Hahella chejuensis (strain KCTC 2396)</name>
    <dbReference type="NCBI Taxonomy" id="349521"/>
    <lineage>
        <taxon>Bacteria</taxon>
        <taxon>Pseudomonadati</taxon>
        <taxon>Pseudomonadota</taxon>
        <taxon>Gammaproteobacteria</taxon>
        <taxon>Oceanospirillales</taxon>
        <taxon>Hahellaceae</taxon>
        <taxon>Hahella</taxon>
    </lineage>
</organism>
<protein>
    <recommendedName>
        <fullName evidence="1">Large ribosomal subunit protein uL24</fullName>
    </recommendedName>
    <alternativeName>
        <fullName evidence="2">50S ribosomal protein L24</fullName>
    </alternativeName>
</protein>
<keyword id="KW-1185">Reference proteome</keyword>
<keyword id="KW-0687">Ribonucleoprotein</keyword>
<keyword id="KW-0689">Ribosomal protein</keyword>
<keyword id="KW-0694">RNA-binding</keyword>
<keyword id="KW-0699">rRNA-binding</keyword>
<evidence type="ECO:0000255" key="1">
    <source>
        <dbReference type="HAMAP-Rule" id="MF_01326"/>
    </source>
</evidence>
<evidence type="ECO:0000305" key="2"/>
<sequence length="105" mass="11468">MNKIRKGDEVVVIAGRDKGKRGKVNRVQKDGKLVVSGVNMVKRHTKPNPMLGTAGGIVEKEAPIQASNVAIFNSATDKPDRIGFKILEDGKKVRIFKSTNELVDN</sequence>
<reference key="1">
    <citation type="journal article" date="2005" name="Nucleic Acids Res.">
        <title>Genomic blueprint of Hahella chejuensis, a marine microbe producing an algicidal agent.</title>
        <authorList>
            <person name="Jeong H."/>
            <person name="Yim J.H."/>
            <person name="Lee C."/>
            <person name="Choi S.-H."/>
            <person name="Park Y.K."/>
            <person name="Yoon S.H."/>
            <person name="Hur C.-G."/>
            <person name="Kang H.-Y."/>
            <person name="Kim D."/>
            <person name="Lee H.H."/>
            <person name="Park K.H."/>
            <person name="Park S.-H."/>
            <person name="Park H.-S."/>
            <person name="Lee H.K."/>
            <person name="Oh T.K."/>
            <person name="Kim J.F."/>
        </authorList>
    </citation>
    <scope>NUCLEOTIDE SEQUENCE [LARGE SCALE GENOMIC DNA]</scope>
    <source>
        <strain>KCTC 2396</strain>
    </source>
</reference>
<name>RL24_HAHCH</name>
<proteinExistence type="inferred from homology"/>
<accession>Q2S923</accession>